<comment type="subcellular location">
    <subcellularLocation>
        <location evidence="1">Cell membrane</location>
        <topology evidence="1">Single-pass membrane protein</topology>
    </subcellularLocation>
</comment>
<comment type="similarity">
    <text evidence="1">Belongs to the UPF0370 family.</text>
</comment>
<accession>A7ML09</accession>
<evidence type="ECO:0000255" key="1">
    <source>
        <dbReference type="HAMAP-Rule" id="MF_01566"/>
    </source>
</evidence>
<evidence type="ECO:0000256" key="2">
    <source>
        <dbReference type="SAM" id="MobiDB-lite"/>
    </source>
</evidence>
<organism>
    <name type="scientific">Cronobacter sakazakii (strain ATCC BAA-894)</name>
    <name type="common">Enterobacter sakazakii</name>
    <dbReference type="NCBI Taxonomy" id="290339"/>
    <lineage>
        <taxon>Bacteria</taxon>
        <taxon>Pseudomonadati</taxon>
        <taxon>Pseudomonadota</taxon>
        <taxon>Gammaproteobacteria</taxon>
        <taxon>Enterobacterales</taxon>
        <taxon>Enterobacteriaceae</taxon>
        <taxon>Cronobacter</taxon>
    </lineage>
</organism>
<proteinExistence type="inferred from homology"/>
<reference key="1">
    <citation type="journal article" date="2010" name="PLoS ONE">
        <title>Genome sequence of Cronobacter sakazakii BAA-894 and comparative genomic hybridization analysis with other Cronobacter species.</title>
        <authorList>
            <person name="Kucerova E."/>
            <person name="Clifton S.W."/>
            <person name="Xia X.Q."/>
            <person name="Long F."/>
            <person name="Porwollik S."/>
            <person name="Fulton L."/>
            <person name="Fronick C."/>
            <person name="Minx P."/>
            <person name="Kyung K."/>
            <person name="Warren W."/>
            <person name="Fulton R."/>
            <person name="Feng D."/>
            <person name="Wollam A."/>
            <person name="Shah N."/>
            <person name="Bhonagiri V."/>
            <person name="Nash W.E."/>
            <person name="Hallsworth-Pepin K."/>
            <person name="Wilson R.K."/>
            <person name="McClelland M."/>
            <person name="Forsythe S.J."/>
        </authorList>
    </citation>
    <scope>NUCLEOTIDE SEQUENCE [LARGE SCALE GENOMIC DNA]</scope>
    <source>
        <strain>ATCC BAA-894</strain>
    </source>
</reference>
<sequence length="62" mass="7707">MEWLGKYWWVLVLVFLLGVLLNVIKDLKRVDHKKFMDNRPELPPHRDFNDKWDDEDDWPKKK</sequence>
<name>Y777_CROS8</name>
<protein>
    <recommendedName>
        <fullName evidence="1">UPF0370 protein ESA_00777</fullName>
    </recommendedName>
</protein>
<keyword id="KW-1003">Cell membrane</keyword>
<keyword id="KW-0472">Membrane</keyword>
<keyword id="KW-1185">Reference proteome</keyword>
<keyword id="KW-0812">Transmembrane</keyword>
<keyword id="KW-1133">Transmembrane helix</keyword>
<feature type="chain" id="PRO_1000069085" description="UPF0370 protein ESA_00777">
    <location>
        <begin position="1"/>
        <end position="62"/>
    </location>
</feature>
<feature type="transmembrane region" description="Helical" evidence="1">
    <location>
        <begin position="4"/>
        <end position="24"/>
    </location>
</feature>
<feature type="region of interest" description="Disordered" evidence="2">
    <location>
        <begin position="36"/>
        <end position="62"/>
    </location>
</feature>
<feature type="compositionally biased region" description="Basic and acidic residues" evidence="2">
    <location>
        <begin position="36"/>
        <end position="51"/>
    </location>
</feature>
<feature type="compositionally biased region" description="Acidic residues" evidence="2">
    <location>
        <begin position="52"/>
        <end position="62"/>
    </location>
</feature>
<dbReference type="EMBL" id="CP000783">
    <property type="protein sequence ID" value="ABU76054.1"/>
    <property type="molecule type" value="Genomic_DNA"/>
</dbReference>
<dbReference type="RefSeq" id="WP_007700459.1">
    <property type="nucleotide sequence ID" value="NC_009778.1"/>
</dbReference>
<dbReference type="SMR" id="A7ML09"/>
<dbReference type="KEGG" id="esa:ESA_00777"/>
<dbReference type="HOGENOM" id="CLU_198936_0_0_6"/>
<dbReference type="Proteomes" id="UP000000260">
    <property type="component" value="Chromosome"/>
</dbReference>
<dbReference type="GO" id="GO:0005886">
    <property type="term" value="C:plasma membrane"/>
    <property type="evidence" value="ECO:0007669"/>
    <property type="project" value="UniProtKB-SubCell"/>
</dbReference>
<dbReference type="HAMAP" id="MF_01566">
    <property type="entry name" value="UPF0370"/>
    <property type="match status" value="1"/>
</dbReference>
<dbReference type="InterPro" id="IPR020910">
    <property type="entry name" value="UPF0370"/>
</dbReference>
<dbReference type="NCBIfam" id="NF010185">
    <property type="entry name" value="PRK13664.1"/>
    <property type="match status" value="1"/>
</dbReference>
<dbReference type="Pfam" id="PF13980">
    <property type="entry name" value="UPF0370"/>
    <property type="match status" value="1"/>
</dbReference>
<gene>
    <name type="ordered locus">ESA_00777</name>
</gene>